<protein>
    <recommendedName>
        <fullName evidence="1">Pyridoxine/pyridoxamine 5'-phosphate oxidase</fullName>
        <ecNumber evidence="1">1.4.3.5</ecNumber>
    </recommendedName>
    <alternativeName>
        <fullName evidence="1">PNP/PMP oxidase</fullName>
        <shortName evidence="1">PNPOx</shortName>
    </alternativeName>
    <alternativeName>
        <fullName evidence="1">Pyridoxal 5'-phosphate synthase</fullName>
    </alternativeName>
</protein>
<sequence length="213" mass="23752">MTSSTGMEAHNPLTSGDFTEVSEPFRLFAEWLAEAGKSEPNDPNAMTLATVDPDGLPDARMVLLKGLDARGFVFFTNTESAKGRELAQTPKAALVFHWKSLRRQVRVRGPVEQVTADEADAYFATRPRLSQIGAWASSQSRPLEGRFALEAAVASATAKYALGTVPRPPHWTGFRVLPVAIEFWHDRPFRLHDRVVFRREGEGADWSRTRLFP</sequence>
<feature type="chain" id="PRO_1000215766" description="Pyridoxine/pyridoxamine 5'-phosphate oxidase">
    <location>
        <begin position="1"/>
        <end position="213"/>
    </location>
</feature>
<feature type="binding site" evidence="1">
    <location>
        <begin position="60"/>
        <end position="65"/>
    </location>
    <ligand>
        <name>FMN</name>
        <dbReference type="ChEBI" id="CHEBI:58210"/>
    </ligand>
</feature>
<feature type="binding site" evidence="1">
    <location>
        <position position="65"/>
    </location>
    <ligand>
        <name>substrate</name>
    </ligand>
</feature>
<feature type="binding site" evidence="1">
    <location>
        <begin position="75"/>
        <end position="76"/>
    </location>
    <ligand>
        <name>FMN</name>
        <dbReference type="ChEBI" id="CHEBI:58210"/>
    </ligand>
</feature>
<feature type="binding site" evidence="1">
    <location>
        <position position="82"/>
    </location>
    <ligand>
        <name>FMN</name>
        <dbReference type="ChEBI" id="CHEBI:58210"/>
    </ligand>
</feature>
<feature type="binding site" evidence="1">
    <location>
        <position position="104"/>
    </location>
    <ligand>
        <name>FMN</name>
        <dbReference type="ChEBI" id="CHEBI:58210"/>
    </ligand>
</feature>
<feature type="binding site" evidence="1">
    <location>
        <position position="122"/>
    </location>
    <ligand>
        <name>substrate</name>
    </ligand>
</feature>
<feature type="binding site" evidence="1">
    <location>
        <position position="126"/>
    </location>
    <ligand>
        <name>substrate</name>
    </ligand>
</feature>
<feature type="binding site" evidence="1">
    <location>
        <position position="130"/>
    </location>
    <ligand>
        <name>substrate</name>
    </ligand>
</feature>
<feature type="binding site" evidence="1">
    <location>
        <begin position="139"/>
        <end position="140"/>
    </location>
    <ligand>
        <name>FMN</name>
        <dbReference type="ChEBI" id="CHEBI:58210"/>
    </ligand>
</feature>
<feature type="binding site" evidence="1">
    <location>
        <position position="184"/>
    </location>
    <ligand>
        <name>FMN</name>
        <dbReference type="ChEBI" id="CHEBI:58210"/>
    </ligand>
</feature>
<feature type="binding site" evidence="1">
    <location>
        <begin position="190"/>
        <end position="192"/>
    </location>
    <ligand>
        <name>substrate</name>
    </ligand>
</feature>
<feature type="binding site" evidence="1">
    <location>
        <position position="194"/>
    </location>
    <ligand>
        <name>FMN</name>
        <dbReference type="ChEBI" id="CHEBI:58210"/>
    </ligand>
</feature>
<dbReference type="EC" id="1.4.3.5" evidence="1"/>
<dbReference type="EMBL" id="CP000781">
    <property type="protein sequence ID" value="ABS67720.1"/>
    <property type="molecule type" value="Genomic_DNA"/>
</dbReference>
<dbReference type="SMR" id="A7II77"/>
<dbReference type="STRING" id="78245.Xaut_2478"/>
<dbReference type="KEGG" id="xau:Xaut_2478"/>
<dbReference type="eggNOG" id="COG0259">
    <property type="taxonomic scope" value="Bacteria"/>
</dbReference>
<dbReference type="HOGENOM" id="CLU_032263_2_3_5"/>
<dbReference type="PhylomeDB" id="A7II77"/>
<dbReference type="UniPathway" id="UPA01068">
    <property type="reaction ID" value="UER00304"/>
</dbReference>
<dbReference type="UniPathway" id="UPA01068">
    <property type="reaction ID" value="UER00305"/>
</dbReference>
<dbReference type="Proteomes" id="UP000002417">
    <property type="component" value="Chromosome"/>
</dbReference>
<dbReference type="GO" id="GO:0010181">
    <property type="term" value="F:FMN binding"/>
    <property type="evidence" value="ECO:0007669"/>
    <property type="project" value="UniProtKB-UniRule"/>
</dbReference>
<dbReference type="GO" id="GO:0004733">
    <property type="term" value="F:pyridoxamine phosphate oxidase activity"/>
    <property type="evidence" value="ECO:0007669"/>
    <property type="project" value="UniProtKB-UniRule"/>
</dbReference>
<dbReference type="GO" id="GO:0008615">
    <property type="term" value="P:pyridoxine biosynthetic process"/>
    <property type="evidence" value="ECO:0007669"/>
    <property type="project" value="UniProtKB-KW"/>
</dbReference>
<dbReference type="Gene3D" id="2.30.110.10">
    <property type="entry name" value="Electron Transport, Fmn-binding Protein, Chain A"/>
    <property type="match status" value="1"/>
</dbReference>
<dbReference type="HAMAP" id="MF_01629">
    <property type="entry name" value="PdxH"/>
    <property type="match status" value="1"/>
</dbReference>
<dbReference type="InterPro" id="IPR000659">
    <property type="entry name" value="Pyridox_Oxase"/>
</dbReference>
<dbReference type="InterPro" id="IPR019740">
    <property type="entry name" value="Pyridox_Oxase_CS"/>
</dbReference>
<dbReference type="InterPro" id="IPR011576">
    <property type="entry name" value="Pyridox_Oxase_N"/>
</dbReference>
<dbReference type="InterPro" id="IPR019576">
    <property type="entry name" value="Pyridoxamine_oxidase_dimer_C"/>
</dbReference>
<dbReference type="InterPro" id="IPR012349">
    <property type="entry name" value="Split_barrel_FMN-bd"/>
</dbReference>
<dbReference type="NCBIfam" id="TIGR00558">
    <property type="entry name" value="pdxH"/>
    <property type="match status" value="1"/>
</dbReference>
<dbReference type="NCBIfam" id="NF004231">
    <property type="entry name" value="PRK05679.1"/>
    <property type="match status" value="1"/>
</dbReference>
<dbReference type="PANTHER" id="PTHR10851:SF0">
    <property type="entry name" value="PYRIDOXINE-5'-PHOSPHATE OXIDASE"/>
    <property type="match status" value="1"/>
</dbReference>
<dbReference type="PANTHER" id="PTHR10851">
    <property type="entry name" value="PYRIDOXINE-5-PHOSPHATE OXIDASE"/>
    <property type="match status" value="1"/>
</dbReference>
<dbReference type="Pfam" id="PF10590">
    <property type="entry name" value="PNP_phzG_C"/>
    <property type="match status" value="1"/>
</dbReference>
<dbReference type="Pfam" id="PF01243">
    <property type="entry name" value="PNPOx_N"/>
    <property type="match status" value="1"/>
</dbReference>
<dbReference type="PIRSF" id="PIRSF000190">
    <property type="entry name" value="Pyd_amn-ph_oxd"/>
    <property type="match status" value="1"/>
</dbReference>
<dbReference type="SUPFAM" id="SSF50475">
    <property type="entry name" value="FMN-binding split barrel"/>
    <property type="match status" value="1"/>
</dbReference>
<dbReference type="PROSITE" id="PS01064">
    <property type="entry name" value="PYRIDOX_OXIDASE"/>
    <property type="match status" value="1"/>
</dbReference>
<comment type="function">
    <text evidence="1">Catalyzes the oxidation of either pyridoxine 5'-phosphate (PNP) or pyridoxamine 5'-phosphate (PMP) into pyridoxal 5'-phosphate (PLP).</text>
</comment>
<comment type="catalytic activity">
    <reaction evidence="1">
        <text>pyridoxamine 5'-phosphate + O2 + H2O = pyridoxal 5'-phosphate + H2O2 + NH4(+)</text>
        <dbReference type="Rhea" id="RHEA:15817"/>
        <dbReference type="ChEBI" id="CHEBI:15377"/>
        <dbReference type="ChEBI" id="CHEBI:15379"/>
        <dbReference type="ChEBI" id="CHEBI:16240"/>
        <dbReference type="ChEBI" id="CHEBI:28938"/>
        <dbReference type="ChEBI" id="CHEBI:58451"/>
        <dbReference type="ChEBI" id="CHEBI:597326"/>
        <dbReference type="EC" id="1.4.3.5"/>
    </reaction>
</comment>
<comment type="catalytic activity">
    <reaction evidence="1">
        <text>pyridoxine 5'-phosphate + O2 = pyridoxal 5'-phosphate + H2O2</text>
        <dbReference type="Rhea" id="RHEA:15149"/>
        <dbReference type="ChEBI" id="CHEBI:15379"/>
        <dbReference type="ChEBI" id="CHEBI:16240"/>
        <dbReference type="ChEBI" id="CHEBI:58589"/>
        <dbReference type="ChEBI" id="CHEBI:597326"/>
        <dbReference type="EC" id="1.4.3.5"/>
    </reaction>
</comment>
<comment type="cofactor">
    <cofactor evidence="1">
        <name>FMN</name>
        <dbReference type="ChEBI" id="CHEBI:58210"/>
    </cofactor>
    <text evidence="1">Binds 1 FMN per subunit.</text>
</comment>
<comment type="pathway">
    <text evidence="1">Cofactor metabolism; pyridoxal 5'-phosphate salvage; pyridoxal 5'-phosphate from pyridoxamine 5'-phosphate: step 1/1.</text>
</comment>
<comment type="pathway">
    <text evidence="1">Cofactor metabolism; pyridoxal 5'-phosphate salvage; pyridoxal 5'-phosphate from pyridoxine 5'-phosphate: step 1/1.</text>
</comment>
<comment type="subunit">
    <text evidence="1">Homodimer.</text>
</comment>
<comment type="similarity">
    <text evidence="1">Belongs to the pyridoxamine 5'-phosphate oxidase family.</text>
</comment>
<evidence type="ECO:0000255" key="1">
    <source>
        <dbReference type="HAMAP-Rule" id="MF_01629"/>
    </source>
</evidence>
<proteinExistence type="inferred from homology"/>
<organism>
    <name type="scientific">Xanthobacter autotrophicus (strain ATCC BAA-1158 / Py2)</name>
    <dbReference type="NCBI Taxonomy" id="78245"/>
    <lineage>
        <taxon>Bacteria</taxon>
        <taxon>Pseudomonadati</taxon>
        <taxon>Pseudomonadota</taxon>
        <taxon>Alphaproteobacteria</taxon>
        <taxon>Hyphomicrobiales</taxon>
        <taxon>Xanthobacteraceae</taxon>
        <taxon>Xanthobacter</taxon>
    </lineage>
</organism>
<accession>A7II77</accession>
<reference key="1">
    <citation type="submission" date="2007-07" db="EMBL/GenBank/DDBJ databases">
        <title>Complete sequence of chromosome of Xanthobacter autotrophicus Py2.</title>
        <authorList>
            <consortium name="US DOE Joint Genome Institute"/>
            <person name="Copeland A."/>
            <person name="Lucas S."/>
            <person name="Lapidus A."/>
            <person name="Barry K."/>
            <person name="Glavina del Rio T."/>
            <person name="Hammon N."/>
            <person name="Israni S."/>
            <person name="Dalin E."/>
            <person name="Tice H."/>
            <person name="Pitluck S."/>
            <person name="Sims D."/>
            <person name="Brettin T."/>
            <person name="Bruce D."/>
            <person name="Detter J.C."/>
            <person name="Han C."/>
            <person name="Tapia R."/>
            <person name="Brainard J."/>
            <person name="Schmutz J."/>
            <person name="Larimer F."/>
            <person name="Land M."/>
            <person name="Hauser L."/>
            <person name="Kyrpides N."/>
            <person name="Kim E."/>
            <person name="Ensigns S.A."/>
            <person name="Richardson P."/>
        </authorList>
    </citation>
    <scope>NUCLEOTIDE SEQUENCE [LARGE SCALE GENOMIC DNA]</scope>
    <source>
        <strain>ATCC BAA-1158 / Py2</strain>
    </source>
</reference>
<gene>
    <name evidence="1" type="primary">pdxH</name>
    <name type="ordered locus">Xaut_2478</name>
</gene>
<keyword id="KW-0285">Flavoprotein</keyword>
<keyword id="KW-0288">FMN</keyword>
<keyword id="KW-0560">Oxidoreductase</keyword>
<keyword id="KW-0664">Pyridoxine biosynthesis</keyword>
<keyword id="KW-1185">Reference proteome</keyword>
<name>PDXH_XANP2</name>